<gene>
    <name evidence="1" type="primary">lepA</name>
    <name type="ordered locus">ACIAD2584</name>
</gene>
<evidence type="ECO:0000255" key="1">
    <source>
        <dbReference type="HAMAP-Rule" id="MF_00071"/>
    </source>
</evidence>
<sequence length="605" mass="66815">MASAKKSVDIKNIRNFSIIAHIDHGKSTLADRFIQMCGGLQDREMQAQVLDSMELERERGITIKAASVTLYYTHPNGQEYQLNFIDTPGHVDFSYEVSRSLAACEGALLVVDAAQGVEAQSVANCYTAIEQGLEVLPILNKIDLPQAEPERVIHEIEEIIGIEATDAPTCSAKTGLGVEGVLERLVDVIPAPEGDRDAPLQALIIDSWFDNYLGVVSLVRIKQGRIRKGDKMLVKSTGQVHPVTSVGVFNPKHSETDILEAGEVGFVIAGIKDIFGAPVGDTITLSSTPEVKTLPGFKKVKPQVYAGLFPIDSSDFEPFREALQKLQINDSALFFEPESSDALGFGFRCGFLGMLHMEIVQERLEREYDLDLISSAPTVVYEALTKKGDTIYIDSPSKMPDASTVEDLREPIAECHILVPQEYLGNVMTLCIERRGVQKDMKFLGNQVSVTFEIPMAEVVMDFFDKLKSCSRGFASLDYNFVRFESSSLVKVDVLINGEKVDALAMICHRQDARHRGIALVEKMKDLIPRQMFDVAIQAAIGAQVIARSTVKAMRKNVLAKCYGGDVSRKKKLLAKQKEGKKRMKQVGSVEIPQEAFLAVLKVER</sequence>
<reference key="1">
    <citation type="journal article" date="2004" name="Nucleic Acids Res.">
        <title>Unique features revealed by the genome sequence of Acinetobacter sp. ADP1, a versatile and naturally transformation competent bacterium.</title>
        <authorList>
            <person name="Barbe V."/>
            <person name="Vallenet D."/>
            <person name="Fonknechten N."/>
            <person name="Kreimeyer A."/>
            <person name="Oztas S."/>
            <person name="Labarre L."/>
            <person name="Cruveiller S."/>
            <person name="Robert C."/>
            <person name="Duprat S."/>
            <person name="Wincker P."/>
            <person name="Ornston L.N."/>
            <person name="Weissenbach J."/>
            <person name="Marliere P."/>
            <person name="Cohen G.N."/>
            <person name="Medigue C."/>
        </authorList>
    </citation>
    <scope>NUCLEOTIDE SEQUENCE [LARGE SCALE GENOMIC DNA]</scope>
    <source>
        <strain>ATCC 33305 / BD413 / ADP1</strain>
    </source>
</reference>
<accession>Q6F9B9</accession>
<feature type="chain" id="PRO_0000176220" description="Elongation factor 4">
    <location>
        <begin position="1"/>
        <end position="605"/>
    </location>
</feature>
<feature type="domain" description="tr-type G">
    <location>
        <begin position="11"/>
        <end position="193"/>
    </location>
</feature>
<feature type="binding site" evidence="1">
    <location>
        <begin position="23"/>
        <end position="28"/>
    </location>
    <ligand>
        <name>GTP</name>
        <dbReference type="ChEBI" id="CHEBI:37565"/>
    </ligand>
</feature>
<feature type="binding site" evidence="1">
    <location>
        <begin position="140"/>
        <end position="143"/>
    </location>
    <ligand>
        <name>GTP</name>
        <dbReference type="ChEBI" id="CHEBI:37565"/>
    </ligand>
</feature>
<comment type="function">
    <text evidence="1">Required for accurate and efficient protein synthesis under certain stress conditions. May act as a fidelity factor of the translation reaction, by catalyzing a one-codon backward translocation of tRNAs on improperly translocated ribosomes. Back-translocation proceeds from a post-translocation (POST) complex to a pre-translocation (PRE) complex, thus giving elongation factor G a second chance to translocate the tRNAs correctly. Binds to ribosomes in a GTP-dependent manner.</text>
</comment>
<comment type="catalytic activity">
    <reaction evidence="1">
        <text>GTP + H2O = GDP + phosphate + H(+)</text>
        <dbReference type="Rhea" id="RHEA:19669"/>
        <dbReference type="ChEBI" id="CHEBI:15377"/>
        <dbReference type="ChEBI" id="CHEBI:15378"/>
        <dbReference type="ChEBI" id="CHEBI:37565"/>
        <dbReference type="ChEBI" id="CHEBI:43474"/>
        <dbReference type="ChEBI" id="CHEBI:58189"/>
        <dbReference type="EC" id="3.6.5.n1"/>
    </reaction>
</comment>
<comment type="subcellular location">
    <subcellularLocation>
        <location evidence="1">Cell inner membrane</location>
        <topology evidence="1">Peripheral membrane protein</topology>
        <orientation evidence="1">Cytoplasmic side</orientation>
    </subcellularLocation>
</comment>
<comment type="similarity">
    <text evidence="1">Belongs to the TRAFAC class translation factor GTPase superfamily. Classic translation factor GTPase family. LepA subfamily.</text>
</comment>
<dbReference type="EC" id="3.6.5.n1" evidence="1"/>
<dbReference type="EMBL" id="CR543861">
    <property type="protein sequence ID" value="CAG69346.1"/>
    <property type="molecule type" value="Genomic_DNA"/>
</dbReference>
<dbReference type="RefSeq" id="WP_004928731.1">
    <property type="nucleotide sequence ID" value="NC_005966.1"/>
</dbReference>
<dbReference type="SMR" id="Q6F9B9"/>
<dbReference type="STRING" id="202950.GCA_001485005_01434"/>
<dbReference type="GeneID" id="45234867"/>
<dbReference type="KEGG" id="aci:ACIAD2584"/>
<dbReference type="eggNOG" id="COG0481">
    <property type="taxonomic scope" value="Bacteria"/>
</dbReference>
<dbReference type="HOGENOM" id="CLU_009995_3_3_6"/>
<dbReference type="OrthoDB" id="9801472at2"/>
<dbReference type="BioCyc" id="ASP62977:ACIAD_RS11750-MONOMER"/>
<dbReference type="Proteomes" id="UP000000430">
    <property type="component" value="Chromosome"/>
</dbReference>
<dbReference type="GO" id="GO:0005886">
    <property type="term" value="C:plasma membrane"/>
    <property type="evidence" value="ECO:0007669"/>
    <property type="project" value="UniProtKB-SubCell"/>
</dbReference>
<dbReference type="GO" id="GO:0005525">
    <property type="term" value="F:GTP binding"/>
    <property type="evidence" value="ECO:0007669"/>
    <property type="project" value="UniProtKB-UniRule"/>
</dbReference>
<dbReference type="GO" id="GO:0003924">
    <property type="term" value="F:GTPase activity"/>
    <property type="evidence" value="ECO:0007669"/>
    <property type="project" value="UniProtKB-UniRule"/>
</dbReference>
<dbReference type="GO" id="GO:0097216">
    <property type="term" value="F:guanosine tetraphosphate binding"/>
    <property type="evidence" value="ECO:0007669"/>
    <property type="project" value="UniProtKB-ARBA"/>
</dbReference>
<dbReference type="GO" id="GO:0043022">
    <property type="term" value="F:ribosome binding"/>
    <property type="evidence" value="ECO:0007669"/>
    <property type="project" value="UniProtKB-UniRule"/>
</dbReference>
<dbReference type="GO" id="GO:0003746">
    <property type="term" value="F:translation elongation factor activity"/>
    <property type="evidence" value="ECO:0007669"/>
    <property type="project" value="UniProtKB-UniRule"/>
</dbReference>
<dbReference type="GO" id="GO:0045727">
    <property type="term" value="P:positive regulation of translation"/>
    <property type="evidence" value="ECO:0007669"/>
    <property type="project" value="UniProtKB-UniRule"/>
</dbReference>
<dbReference type="CDD" id="cd03699">
    <property type="entry name" value="EF4_II"/>
    <property type="match status" value="1"/>
</dbReference>
<dbReference type="CDD" id="cd16260">
    <property type="entry name" value="EF4_III"/>
    <property type="match status" value="1"/>
</dbReference>
<dbReference type="CDD" id="cd01890">
    <property type="entry name" value="LepA"/>
    <property type="match status" value="1"/>
</dbReference>
<dbReference type="CDD" id="cd03709">
    <property type="entry name" value="lepA_C"/>
    <property type="match status" value="1"/>
</dbReference>
<dbReference type="FunFam" id="3.40.50.300:FF:000078">
    <property type="entry name" value="Elongation factor 4"/>
    <property type="match status" value="1"/>
</dbReference>
<dbReference type="FunFam" id="2.40.30.10:FF:000015">
    <property type="entry name" value="Translation factor GUF1, mitochondrial"/>
    <property type="match status" value="1"/>
</dbReference>
<dbReference type="FunFam" id="3.30.70.240:FF:000007">
    <property type="entry name" value="Translation factor GUF1, mitochondrial"/>
    <property type="match status" value="1"/>
</dbReference>
<dbReference type="FunFam" id="3.30.70.2570:FF:000001">
    <property type="entry name" value="Translation factor GUF1, mitochondrial"/>
    <property type="match status" value="1"/>
</dbReference>
<dbReference type="FunFam" id="3.30.70.870:FF:000004">
    <property type="entry name" value="Translation factor GUF1, mitochondrial"/>
    <property type="match status" value="1"/>
</dbReference>
<dbReference type="Gene3D" id="3.30.70.240">
    <property type="match status" value="1"/>
</dbReference>
<dbReference type="Gene3D" id="3.30.70.2570">
    <property type="entry name" value="Elongation factor 4, C-terminal domain"/>
    <property type="match status" value="1"/>
</dbReference>
<dbReference type="Gene3D" id="3.30.70.870">
    <property type="entry name" value="Elongation Factor G (Translational Gtpase), domain 3"/>
    <property type="match status" value="1"/>
</dbReference>
<dbReference type="Gene3D" id="3.40.50.300">
    <property type="entry name" value="P-loop containing nucleotide triphosphate hydrolases"/>
    <property type="match status" value="1"/>
</dbReference>
<dbReference type="Gene3D" id="2.40.30.10">
    <property type="entry name" value="Translation factors"/>
    <property type="match status" value="1"/>
</dbReference>
<dbReference type="HAMAP" id="MF_00071">
    <property type="entry name" value="LepA"/>
    <property type="match status" value="1"/>
</dbReference>
<dbReference type="InterPro" id="IPR006297">
    <property type="entry name" value="EF-4"/>
</dbReference>
<dbReference type="InterPro" id="IPR035647">
    <property type="entry name" value="EFG_III/V"/>
</dbReference>
<dbReference type="InterPro" id="IPR000640">
    <property type="entry name" value="EFG_V-like"/>
</dbReference>
<dbReference type="InterPro" id="IPR004161">
    <property type="entry name" value="EFTu-like_2"/>
</dbReference>
<dbReference type="InterPro" id="IPR031157">
    <property type="entry name" value="G_TR_CS"/>
</dbReference>
<dbReference type="InterPro" id="IPR038363">
    <property type="entry name" value="LepA_C_sf"/>
</dbReference>
<dbReference type="InterPro" id="IPR013842">
    <property type="entry name" value="LepA_CTD"/>
</dbReference>
<dbReference type="InterPro" id="IPR035654">
    <property type="entry name" value="LepA_IV"/>
</dbReference>
<dbReference type="InterPro" id="IPR027417">
    <property type="entry name" value="P-loop_NTPase"/>
</dbReference>
<dbReference type="InterPro" id="IPR005225">
    <property type="entry name" value="Small_GTP-bd"/>
</dbReference>
<dbReference type="InterPro" id="IPR000795">
    <property type="entry name" value="T_Tr_GTP-bd_dom"/>
</dbReference>
<dbReference type="NCBIfam" id="TIGR01393">
    <property type="entry name" value="lepA"/>
    <property type="match status" value="1"/>
</dbReference>
<dbReference type="NCBIfam" id="TIGR00231">
    <property type="entry name" value="small_GTP"/>
    <property type="match status" value="1"/>
</dbReference>
<dbReference type="PANTHER" id="PTHR43512:SF4">
    <property type="entry name" value="TRANSLATION FACTOR GUF1 HOMOLOG, CHLOROPLASTIC"/>
    <property type="match status" value="1"/>
</dbReference>
<dbReference type="PANTHER" id="PTHR43512">
    <property type="entry name" value="TRANSLATION FACTOR GUF1-RELATED"/>
    <property type="match status" value="1"/>
</dbReference>
<dbReference type="Pfam" id="PF00679">
    <property type="entry name" value="EFG_C"/>
    <property type="match status" value="1"/>
</dbReference>
<dbReference type="Pfam" id="PF00009">
    <property type="entry name" value="GTP_EFTU"/>
    <property type="match status" value="1"/>
</dbReference>
<dbReference type="Pfam" id="PF03144">
    <property type="entry name" value="GTP_EFTU_D2"/>
    <property type="match status" value="1"/>
</dbReference>
<dbReference type="Pfam" id="PF06421">
    <property type="entry name" value="LepA_C"/>
    <property type="match status" value="1"/>
</dbReference>
<dbReference type="PRINTS" id="PR00315">
    <property type="entry name" value="ELONGATNFCT"/>
</dbReference>
<dbReference type="SMART" id="SM00838">
    <property type="entry name" value="EFG_C"/>
    <property type="match status" value="1"/>
</dbReference>
<dbReference type="SUPFAM" id="SSF54980">
    <property type="entry name" value="EF-G C-terminal domain-like"/>
    <property type="match status" value="2"/>
</dbReference>
<dbReference type="SUPFAM" id="SSF52540">
    <property type="entry name" value="P-loop containing nucleoside triphosphate hydrolases"/>
    <property type="match status" value="1"/>
</dbReference>
<dbReference type="PROSITE" id="PS00301">
    <property type="entry name" value="G_TR_1"/>
    <property type="match status" value="1"/>
</dbReference>
<dbReference type="PROSITE" id="PS51722">
    <property type="entry name" value="G_TR_2"/>
    <property type="match status" value="1"/>
</dbReference>
<keyword id="KW-0997">Cell inner membrane</keyword>
<keyword id="KW-1003">Cell membrane</keyword>
<keyword id="KW-0342">GTP-binding</keyword>
<keyword id="KW-0378">Hydrolase</keyword>
<keyword id="KW-0472">Membrane</keyword>
<keyword id="KW-0547">Nucleotide-binding</keyword>
<keyword id="KW-0648">Protein biosynthesis</keyword>
<proteinExistence type="inferred from homology"/>
<organism>
    <name type="scientific">Acinetobacter baylyi (strain ATCC 33305 / BD413 / ADP1)</name>
    <dbReference type="NCBI Taxonomy" id="62977"/>
    <lineage>
        <taxon>Bacteria</taxon>
        <taxon>Pseudomonadati</taxon>
        <taxon>Pseudomonadota</taxon>
        <taxon>Gammaproteobacteria</taxon>
        <taxon>Moraxellales</taxon>
        <taxon>Moraxellaceae</taxon>
        <taxon>Acinetobacter</taxon>
    </lineage>
</organism>
<protein>
    <recommendedName>
        <fullName evidence="1">Elongation factor 4</fullName>
        <shortName evidence="1">EF-4</shortName>
        <ecNumber evidence="1">3.6.5.n1</ecNumber>
    </recommendedName>
    <alternativeName>
        <fullName evidence="1">Ribosomal back-translocase LepA</fullName>
    </alternativeName>
</protein>
<name>LEPA_ACIAD</name>